<accession>Q0BHF7</accession>
<proteinExistence type="inferred from homology"/>
<evidence type="ECO:0000255" key="1">
    <source>
        <dbReference type="HAMAP-Rule" id="MF_00564"/>
    </source>
</evidence>
<reference key="1">
    <citation type="submission" date="2006-08" db="EMBL/GenBank/DDBJ databases">
        <title>Complete sequence of chromosome 1 of Burkholderia cepacia AMMD.</title>
        <authorList>
            <person name="Copeland A."/>
            <person name="Lucas S."/>
            <person name="Lapidus A."/>
            <person name="Barry K."/>
            <person name="Detter J.C."/>
            <person name="Glavina del Rio T."/>
            <person name="Hammon N."/>
            <person name="Israni S."/>
            <person name="Pitluck S."/>
            <person name="Bruce D."/>
            <person name="Chain P."/>
            <person name="Malfatti S."/>
            <person name="Shin M."/>
            <person name="Vergez L."/>
            <person name="Schmutz J."/>
            <person name="Larimer F."/>
            <person name="Land M."/>
            <person name="Hauser L."/>
            <person name="Kyrpides N."/>
            <person name="Kim E."/>
            <person name="Parke J."/>
            <person name="Coenye T."/>
            <person name="Konstantinidis K."/>
            <person name="Ramette A."/>
            <person name="Tiedje J."/>
            <person name="Richardson P."/>
        </authorList>
    </citation>
    <scope>NUCLEOTIDE SEQUENCE [LARGE SCALE GENOMIC DNA]</scope>
    <source>
        <strain>ATCC BAA-244 / DSM 16087 / CCUG 44356 / LMG 19182 / AMMD</strain>
    </source>
</reference>
<dbReference type="EC" id="2.7.7.56" evidence="1"/>
<dbReference type="EMBL" id="CP000440">
    <property type="protein sequence ID" value="ABI86416.1"/>
    <property type="molecule type" value="Genomic_DNA"/>
</dbReference>
<dbReference type="RefSeq" id="WP_011656222.1">
    <property type="nucleotide sequence ID" value="NC_008390.1"/>
</dbReference>
<dbReference type="SMR" id="Q0BHF7"/>
<dbReference type="GeneID" id="93083735"/>
<dbReference type="KEGG" id="bam:Bamb_0857"/>
<dbReference type="PATRIC" id="fig|339670.21.peg.726"/>
<dbReference type="eggNOG" id="COG0689">
    <property type="taxonomic scope" value="Bacteria"/>
</dbReference>
<dbReference type="Proteomes" id="UP000000662">
    <property type="component" value="Chromosome 1"/>
</dbReference>
<dbReference type="GO" id="GO:0000175">
    <property type="term" value="F:3'-5'-RNA exonuclease activity"/>
    <property type="evidence" value="ECO:0007669"/>
    <property type="project" value="UniProtKB-UniRule"/>
</dbReference>
<dbReference type="GO" id="GO:0000049">
    <property type="term" value="F:tRNA binding"/>
    <property type="evidence" value="ECO:0007669"/>
    <property type="project" value="UniProtKB-UniRule"/>
</dbReference>
<dbReference type="GO" id="GO:0009022">
    <property type="term" value="F:tRNA nucleotidyltransferase activity"/>
    <property type="evidence" value="ECO:0007669"/>
    <property type="project" value="UniProtKB-UniRule"/>
</dbReference>
<dbReference type="GO" id="GO:0016075">
    <property type="term" value="P:rRNA catabolic process"/>
    <property type="evidence" value="ECO:0007669"/>
    <property type="project" value="UniProtKB-UniRule"/>
</dbReference>
<dbReference type="GO" id="GO:0006364">
    <property type="term" value="P:rRNA processing"/>
    <property type="evidence" value="ECO:0007669"/>
    <property type="project" value="UniProtKB-KW"/>
</dbReference>
<dbReference type="GO" id="GO:0008033">
    <property type="term" value="P:tRNA processing"/>
    <property type="evidence" value="ECO:0007669"/>
    <property type="project" value="UniProtKB-UniRule"/>
</dbReference>
<dbReference type="CDD" id="cd11362">
    <property type="entry name" value="RNase_PH_bact"/>
    <property type="match status" value="1"/>
</dbReference>
<dbReference type="FunFam" id="3.30.230.70:FF:000003">
    <property type="entry name" value="Ribonuclease PH"/>
    <property type="match status" value="1"/>
</dbReference>
<dbReference type="Gene3D" id="3.30.230.70">
    <property type="entry name" value="GHMP Kinase, N-terminal domain"/>
    <property type="match status" value="1"/>
</dbReference>
<dbReference type="HAMAP" id="MF_00564">
    <property type="entry name" value="RNase_PH"/>
    <property type="match status" value="1"/>
</dbReference>
<dbReference type="InterPro" id="IPR001247">
    <property type="entry name" value="ExoRNase_PH_dom1"/>
</dbReference>
<dbReference type="InterPro" id="IPR015847">
    <property type="entry name" value="ExoRNase_PH_dom2"/>
</dbReference>
<dbReference type="InterPro" id="IPR036345">
    <property type="entry name" value="ExoRNase_PH_dom2_sf"/>
</dbReference>
<dbReference type="InterPro" id="IPR027408">
    <property type="entry name" value="PNPase/RNase_PH_dom_sf"/>
</dbReference>
<dbReference type="InterPro" id="IPR020568">
    <property type="entry name" value="Ribosomal_Su5_D2-typ_SF"/>
</dbReference>
<dbReference type="InterPro" id="IPR050080">
    <property type="entry name" value="RNase_PH"/>
</dbReference>
<dbReference type="InterPro" id="IPR002381">
    <property type="entry name" value="RNase_PH_bac-type"/>
</dbReference>
<dbReference type="InterPro" id="IPR018336">
    <property type="entry name" value="RNase_PH_CS"/>
</dbReference>
<dbReference type="NCBIfam" id="TIGR01966">
    <property type="entry name" value="RNasePH"/>
    <property type="match status" value="1"/>
</dbReference>
<dbReference type="PANTHER" id="PTHR11953">
    <property type="entry name" value="EXOSOME COMPLEX COMPONENT"/>
    <property type="match status" value="1"/>
</dbReference>
<dbReference type="PANTHER" id="PTHR11953:SF0">
    <property type="entry name" value="EXOSOME COMPLEX COMPONENT RRP41"/>
    <property type="match status" value="1"/>
</dbReference>
<dbReference type="Pfam" id="PF01138">
    <property type="entry name" value="RNase_PH"/>
    <property type="match status" value="1"/>
</dbReference>
<dbReference type="Pfam" id="PF03725">
    <property type="entry name" value="RNase_PH_C"/>
    <property type="match status" value="1"/>
</dbReference>
<dbReference type="SUPFAM" id="SSF55666">
    <property type="entry name" value="Ribonuclease PH domain 2-like"/>
    <property type="match status" value="1"/>
</dbReference>
<dbReference type="SUPFAM" id="SSF54211">
    <property type="entry name" value="Ribosomal protein S5 domain 2-like"/>
    <property type="match status" value="1"/>
</dbReference>
<dbReference type="PROSITE" id="PS01277">
    <property type="entry name" value="RIBONUCLEASE_PH"/>
    <property type="match status" value="1"/>
</dbReference>
<protein>
    <recommendedName>
        <fullName evidence="1">Ribonuclease PH</fullName>
        <shortName evidence="1">RNase PH</shortName>
        <ecNumber evidence="1">2.7.7.56</ecNumber>
    </recommendedName>
    <alternativeName>
        <fullName evidence="1">tRNA nucleotidyltransferase</fullName>
    </alternativeName>
</protein>
<keyword id="KW-0548">Nucleotidyltransferase</keyword>
<keyword id="KW-0694">RNA-binding</keyword>
<keyword id="KW-0698">rRNA processing</keyword>
<keyword id="KW-0808">Transferase</keyword>
<keyword id="KW-0819">tRNA processing</keyword>
<keyword id="KW-0820">tRNA-binding</keyword>
<organism>
    <name type="scientific">Burkholderia ambifaria (strain ATCC BAA-244 / DSM 16087 / CCUG 44356 / LMG 19182 / AMMD)</name>
    <name type="common">Burkholderia cepacia (strain AMMD)</name>
    <dbReference type="NCBI Taxonomy" id="339670"/>
    <lineage>
        <taxon>Bacteria</taxon>
        <taxon>Pseudomonadati</taxon>
        <taxon>Pseudomonadota</taxon>
        <taxon>Betaproteobacteria</taxon>
        <taxon>Burkholderiales</taxon>
        <taxon>Burkholderiaceae</taxon>
        <taxon>Burkholderia</taxon>
        <taxon>Burkholderia cepacia complex</taxon>
    </lineage>
</organism>
<comment type="function">
    <text evidence="1">Phosphorolytic 3'-5' exoribonuclease that plays an important role in tRNA 3'-end maturation. Removes nucleotide residues following the 3'-CCA terminus of tRNAs; can also add nucleotides to the ends of RNA molecules by using nucleoside diphosphates as substrates, but this may not be physiologically important. Probably plays a role in initiation of 16S rRNA degradation (leading to ribosome degradation) during starvation.</text>
</comment>
<comment type="catalytic activity">
    <reaction evidence="1">
        <text>tRNA(n+1) + phosphate = tRNA(n) + a ribonucleoside 5'-diphosphate</text>
        <dbReference type="Rhea" id="RHEA:10628"/>
        <dbReference type="Rhea" id="RHEA-COMP:17343"/>
        <dbReference type="Rhea" id="RHEA-COMP:17344"/>
        <dbReference type="ChEBI" id="CHEBI:43474"/>
        <dbReference type="ChEBI" id="CHEBI:57930"/>
        <dbReference type="ChEBI" id="CHEBI:173114"/>
        <dbReference type="EC" id="2.7.7.56"/>
    </reaction>
</comment>
<comment type="subunit">
    <text evidence="1">Homohexameric ring arranged as a trimer of dimers.</text>
</comment>
<comment type="similarity">
    <text evidence="1">Belongs to the RNase PH family.</text>
</comment>
<sequence length="246" mass="26286">MTSSLSRPSGRRADELRKVALTRHYTKHAEGSVLVEFGDTKVICTASVAERVPEFLRDRGQGWLTAEYGMLPRATHTRSDREAARGKQTGRTQEIQRLIGRALRAVFDLEALGPRTIHIDCDVIQADGGTRTASITGAFVAAHDAVSKLIAAGKLARSPITDHVAAISVGVYEGVPLLDLDYAEDSRCDTDMNVVMTGAGGFVEVQGTAEGVPFSRAEMNALLDLAQSGIGQLVQLQKDVLGAGNV</sequence>
<name>RNPH_BURCM</name>
<gene>
    <name evidence="1" type="primary">rph</name>
    <name type="ordered locus">Bamb_0857</name>
</gene>
<feature type="chain" id="PRO_1000024785" description="Ribonuclease PH">
    <location>
        <begin position="1"/>
        <end position="246"/>
    </location>
</feature>
<feature type="binding site" evidence="1">
    <location>
        <position position="91"/>
    </location>
    <ligand>
        <name>phosphate</name>
        <dbReference type="ChEBI" id="CHEBI:43474"/>
        <note>substrate</note>
    </ligand>
</feature>
<feature type="binding site" evidence="1">
    <location>
        <begin position="129"/>
        <end position="131"/>
    </location>
    <ligand>
        <name>phosphate</name>
        <dbReference type="ChEBI" id="CHEBI:43474"/>
        <note>substrate</note>
    </ligand>
</feature>